<proteinExistence type="inferred from homology"/>
<protein>
    <recommendedName>
        <fullName evidence="1">Adenylate kinase</fullName>
        <shortName evidence="1">AK</shortName>
        <ecNumber evidence="1">2.7.4.3</ecNumber>
    </recommendedName>
    <alternativeName>
        <fullName evidence="1">ATP-AMP transphosphorylase</fullName>
    </alternativeName>
    <alternativeName>
        <fullName evidence="1">ATP:AMP phosphotransferase</fullName>
    </alternativeName>
    <alternativeName>
        <fullName evidence="1">Adenylate monophosphate kinase</fullName>
    </alternativeName>
</protein>
<feature type="chain" id="PRO_1000058891" description="Adenylate kinase">
    <location>
        <begin position="1"/>
        <end position="214"/>
    </location>
</feature>
<feature type="region of interest" description="NMP" evidence="1">
    <location>
        <begin position="30"/>
        <end position="59"/>
    </location>
</feature>
<feature type="region of interest" description="LID">
    <location>
        <begin position="122"/>
        <end position="159"/>
    </location>
</feature>
<feature type="binding site" evidence="1">
    <location>
        <begin position="10"/>
        <end position="15"/>
    </location>
    <ligand>
        <name>ATP</name>
        <dbReference type="ChEBI" id="CHEBI:30616"/>
    </ligand>
</feature>
<feature type="binding site" evidence="1">
    <location>
        <position position="31"/>
    </location>
    <ligand>
        <name>AMP</name>
        <dbReference type="ChEBI" id="CHEBI:456215"/>
    </ligand>
</feature>
<feature type="binding site" evidence="1">
    <location>
        <position position="36"/>
    </location>
    <ligand>
        <name>AMP</name>
        <dbReference type="ChEBI" id="CHEBI:456215"/>
    </ligand>
</feature>
<feature type="binding site" evidence="1">
    <location>
        <begin position="57"/>
        <end position="59"/>
    </location>
    <ligand>
        <name>AMP</name>
        <dbReference type="ChEBI" id="CHEBI:456215"/>
    </ligand>
</feature>
<feature type="binding site" evidence="1">
    <location>
        <begin position="85"/>
        <end position="88"/>
    </location>
    <ligand>
        <name>AMP</name>
        <dbReference type="ChEBI" id="CHEBI:456215"/>
    </ligand>
</feature>
<feature type="binding site" evidence="1">
    <location>
        <position position="92"/>
    </location>
    <ligand>
        <name>AMP</name>
        <dbReference type="ChEBI" id="CHEBI:456215"/>
    </ligand>
</feature>
<feature type="binding site" evidence="1">
    <location>
        <position position="123"/>
    </location>
    <ligand>
        <name>ATP</name>
        <dbReference type="ChEBI" id="CHEBI:30616"/>
    </ligand>
</feature>
<feature type="binding site" evidence="1">
    <location>
        <begin position="132"/>
        <end position="133"/>
    </location>
    <ligand>
        <name>ATP</name>
        <dbReference type="ChEBI" id="CHEBI:30616"/>
    </ligand>
</feature>
<feature type="binding site" evidence="1">
    <location>
        <position position="156"/>
    </location>
    <ligand>
        <name>AMP</name>
        <dbReference type="ChEBI" id="CHEBI:456215"/>
    </ligand>
</feature>
<feature type="binding site" evidence="1">
    <location>
        <position position="167"/>
    </location>
    <ligand>
        <name>AMP</name>
        <dbReference type="ChEBI" id="CHEBI:456215"/>
    </ligand>
</feature>
<feature type="binding site" evidence="1">
    <location>
        <position position="200"/>
    </location>
    <ligand>
        <name>ATP</name>
        <dbReference type="ChEBI" id="CHEBI:30616"/>
    </ligand>
</feature>
<evidence type="ECO:0000255" key="1">
    <source>
        <dbReference type="HAMAP-Rule" id="MF_00235"/>
    </source>
</evidence>
<organism>
    <name type="scientific">Salmonella paratyphi A (strain ATCC 9150 / SARB42)</name>
    <dbReference type="NCBI Taxonomy" id="295319"/>
    <lineage>
        <taxon>Bacteria</taxon>
        <taxon>Pseudomonadati</taxon>
        <taxon>Pseudomonadota</taxon>
        <taxon>Gammaproteobacteria</taxon>
        <taxon>Enterobacterales</taxon>
        <taxon>Enterobacteriaceae</taxon>
        <taxon>Salmonella</taxon>
    </lineage>
</organism>
<accession>Q5PFK8</accession>
<sequence length="214" mass="23488">MRIILLGAPGAGKGTQAQFIMEKYGIPQISTGDMLRAAVKSGSELGKQAKDIMDAGKLVTDELVIALVKERIAQEDCRNGFLLDGFPRTIPQADAMKEAGIVVDYVLEFDVPDELIVDRIVGRRVHAASGRVYHVKFNPPKVEGKDDVTGEDLTTRKDDQEETVRKRLVEYHQMTAPLIGYYQKEAEAGNTKYAKVDGTQAVADVRAALEKILG</sequence>
<comment type="function">
    <text evidence="1">Catalyzes the reversible transfer of the terminal phosphate group between ATP and AMP. Plays an important role in cellular energy homeostasis and in adenine nucleotide metabolism.</text>
</comment>
<comment type="catalytic activity">
    <reaction evidence="1">
        <text>AMP + ATP = 2 ADP</text>
        <dbReference type="Rhea" id="RHEA:12973"/>
        <dbReference type="ChEBI" id="CHEBI:30616"/>
        <dbReference type="ChEBI" id="CHEBI:456215"/>
        <dbReference type="ChEBI" id="CHEBI:456216"/>
        <dbReference type="EC" id="2.7.4.3"/>
    </reaction>
</comment>
<comment type="pathway">
    <text evidence="1">Purine metabolism; AMP biosynthesis via salvage pathway; AMP from ADP: step 1/1.</text>
</comment>
<comment type="subunit">
    <text evidence="1">Monomer.</text>
</comment>
<comment type="subcellular location">
    <subcellularLocation>
        <location evidence="1">Cytoplasm</location>
    </subcellularLocation>
</comment>
<comment type="domain">
    <text evidence="1">Consists of three domains, a large central CORE domain and two small peripheral domains, NMPbind and LID, which undergo movements during catalysis. The LID domain closes over the site of phosphoryl transfer upon ATP binding. Assembling and dissambling the active center during each catalytic cycle provides an effective means to prevent ATP hydrolysis.</text>
</comment>
<comment type="similarity">
    <text evidence="1">Belongs to the adenylate kinase family.</text>
</comment>
<reference key="1">
    <citation type="journal article" date="2004" name="Nat. Genet.">
        <title>Comparison of genome degradation in Paratyphi A and Typhi, human-restricted serovars of Salmonella enterica that cause typhoid.</title>
        <authorList>
            <person name="McClelland M."/>
            <person name="Sanderson K.E."/>
            <person name="Clifton S.W."/>
            <person name="Latreille P."/>
            <person name="Porwollik S."/>
            <person name="Sabo A."/>
            <person name="Meyer R."/>
            <person name="Bieri T."/>
            <person name="Ozersky P."/>
            <person name="McLellan M."/>
            <person name="Harkins C.R."/>
            <person name="Wang C."/>
            <person name="Nguyen C."/>
            <person name="Berghoff A."/>
            <person name="Elliott G."/>
            <person name="Kohlberg S."/>
            <person name="Strong C."/>
            <person name="Du F."/>
            <person name="Carter J."/>
            <person name="Kremizki C."/>
            <person name="Layman D."/>
            <person name="Leonard S."/>
            <person name="Sun H."/>
            <person name="Fulton L."/>
            <person name="Nash W."/>
            <person name="Miner T."/>
            <person name="Minx P."/>
            <person name="Delehaunty K."/>
            <person name="Fronick C."/>
            <person name="Magrini V."/>
            <person name="Nhan M."/>
            <person name="Warren W."/>
            <person name="Florea L."/>
            <person name="Spieth J."/>
            <person name="Wilson R.K."/>
        </authorList>
    </citation>
    <scope>NUCLEOTIDE SEQUENCE [LARGE SCALE GENOMIC DNA]</scope>
    <source>
        <strain>ATCC 9150 / SARB42</strain>
    </source>
</reference>
<keyword id="KW-0067">ATP-binding</keyword>
<keyword id="KW-0963">Cytoplasm</keyword>
<keyword id="KW-0418">Kinase</keyword>
<keyword id="KW-0545">Nucleotide biosynthesis</keyword>
<keyword id="KW-0547">Nucleotide-binding</keyword>
<keyword id="KW-0808">Transferase</keyword>
<gene>
    <name evidence="1" type="primary">adk</name>
    <name type="ordered locus">SPA2234</name>
</gene>
<dbReference type="EC" id="2.7.4.3" evidence="1"/>
<dbReference type="EMBL" id="CP000026">
    <property type="protein sequence ID" value="AAV78120.1"/>
    <property type="molecule type" value="Genomic_DNA"/>
</dbReference>
<dbReference type="RefSeq" id="WP_001220237.1">
    <property type="nucleotide sequence ID" value="NC_006511.1"/>
</dbReference>
<dbReference type="SMR" id="Q5PFK8"/>
<dbReference type="KEGG" id="spt:SPA2234"/>
<dbReference type="HOGENOM" id="CLU_032354_1_2_6"/>
<dbReference type="UniPathway" id="UPA00588">
    <property type="reaction ID" value="UER00649"/>
</dbReference>
<dbReference type="Proteomes" id="UP000008185">
    <property type="component" value="Chromosome"/>
</dbReference>
<dbReference type="GO" id="GO:0005737">
    <property type="term" value="C:cytoplasm"/>
    <property type="evidence" value="ECO:0007669"/>
    <property type="project" value="UniProtKB-SubCell"/>
</dbReference>
<dbReference type="GO" id="GO:0004017">
    <property type="term" value="F:adenylate kinase activity"/>
    <property type="evidence" value="ECO:0007669"/>
    <property type="project" value="UniProtKB-UniRule"/>
</dbReference>
<dbReference type="GO" id="GO:0005524">
    <property type="term" value="F:ATP binding"/>
    <property type="evidence" value="ECO:0007669"/>
    <property type="project" value="UniProtKB-UniRule"/>
</dbReference>
<dbReference type="GO" id="GO:0044209">
    <property type="term" value="P:AMP salvage"/>
    <property type="evidence" value="ECO:0007669"/>
    <property type="project" value="UniProtKB-UniRule"/>
</dbReference>
<dbReference type="CDD" id="cd01428">
    <property type="entry name" value="ADK"/>
    <property type="match status" value="1"/>
</dbReference>
<dbReference type="FunFam" id="3.40.50.300:FF:000106">
    <property type="entry name" value="Adenylate kinase mitochondrial"/>
    <property type="match status" value="1"/>
</dbReference>
<dbReference type="Gene3D" id="3.40.50.300">
    <property type="entry name" value="P-loop containing nucleotide triphosphate hydrolases"/>
    <property type="match status" value="1"/>
</dbReference>
<dbReference type="HAMAP" id="MF_00235">
    <property type="entry name" value="Adenylate_kinase_Adk"/>
    <property type="match status" value="1"/>
</dbReference>
<dbReference type="InterPro" id="IPR006259">
    <property type="entry name" value="Adenyl_kin_sub"/>
</dbReference>
<dbReference type="InterPro" id="IPR000850">
    <property type="entry name" value="Adenylat/UMP-CMP_kin"/>
</dbReference>
<dbReference type="InterPro" id="IPR033690">
    <property type="entry name" value="Adenylat_kinase_CS"/>
</dbReference>
<dbReference type="InterPro" id="IPR007862">
    <property type="entry name" value="Adenylate_kinase_lid-dom"/>
</dbReference>
<dbReference type="InterPro" id="IPR027417">
    <property type="entry name" value="P-loop_NTPase"/>
</dbReference>
<dbReference type="NCBIfam" id="TIGR01351">
    <property type="entry name" value="adk"/>
    <property type="match status" value="1"/>
</dbReference>
<dbReference type="NCBIfam" id="NF001379">
    <property type="entry name" value="PRK00279.1-1"/>
    <property type="match status" value="1"/>
</dbReference>
<dbReference type="NCBIfam" id="NF001380">
    <property type="entry name" value="PRK00279.1-2"/>
    <property type="match status" value="1"/>
</dbReference>
<dbReference type="NCBIfam" id="NF001381">
    <property type="entry name" value="PRK00279.1-3"/>
    <property type="match status" value="1"/>
</dbReference>
<dbReference type="NCBIfam" id="NF011100">
    <property type="entry name" value="PRK14527.1"/>
    <property type="match status" value="1"/>
</dbReference>
<dbReference type="PANTHER" id="PTHR23359">
    <property type="entry name" value="NUCLEOTIDE KINASE"/>
    <property type="match status" value="1"/>
</dbReference>
<dbReference type="Pfam" id="PF00406">
    <property type="entry name" value="ADK"/>
    <property type="match status" value="1"/>
</dbReference>
<dbReference type="Pfam" id="PF05191">
    <property type="entry name" value="ADK_lid"/>
    <property type="match status" value="1"/>
</dbReference>
<dbReference type="PRINTS" id="PR00094">
    <property type="entry name" value="ADENYLTKNASE"/>
</dbReference>
<dbReference type="SUPFAM" id="SSF52540">
    <property type="entry name" value="P-loop containing nucleoside triphosphate hydrolases"/>
    <property type="match status" value="1"/>
</dbReference>
<dbReference type="PROSITE" id="PS00113">
    <property type="entry name" value="ADENYLATE_KINASE"/>
    <property type="match status" value="1"/>
</dbReference>
<name>KAD_SALPA</name>